<evidence type="ECO:0000255" key="1">
    <source>
        <dbReference type="HAMAP-Rule" id="MF_00802"/>
    </source>
</evidence>
<sequence length="937" mass="102203">MSQPIPSASPALAALIERAVARVRHALPADAPWPEGVEHPLARVALASDFVVDTLARQPALLAHLAQPDPPPLPVPRLDPAQPQEWAAQLRRYRAAASARLVWRDVLGLDDVDATLAGATTLAETCLQCALQALEQQFSTRHGQVIAEDGSVQRLVVFGLGKLGGGELNFSSDVDLVYAYPQAGQSDGARPLAAEEYFARLGQQLARLLDETTADGFSHRVDLRLRPFGSAGRVALSFNGMDQYFQREGRDWERYAWLKARAVAGDIAAGEAWLETLRPFVYRRYLDFTALDGLRDMKAAITAEVAHHARLDDIKRGPGGIREIEFLAQSLQLIRGGREASLRERRLLPALQALVDLGQIDPPTGQALADAYRFLRRVENRLQMLRDAQTHALPQGEPERERIALGLGYAHWQALLEALAPHRTRVAAEFAELLAPRVHATAPDTLADYWRALPEGDAAPLLGIGLHDPNNAHHMLADFAQSSGVRALSDGARTRLDRVMPALLHAAIRATQPDAALRRVLGLLQATLRRTSYLALLDEQPSALARLVDVLSRSALLAERLAAYPLLLDELLDTRISGPLPDRAALHTACVDTLQIDDTEAALRELNERRLALSFRIALATLDGRQQPVDSTQQLAWLAEAVVQTVLQLARRELVAAHGQVPGGAFAIIGYGSLGGLELGFGSDLDLVFLYDHPREVEASDGKRPLEAGRWFARLAQKVMTLLGAETGAGRLYDIDVRLRPDGGKGALVSSLASYRDYQRDRAWTWEHQALVRARAVAGDAALCEAFVQVRRETLTRVRDPALLHEDVRKMRARMRSELDRSDAGRLDLKQGAGGLVDLEFLLQAGVLGQAAQHPALLLACATPALIDALVQVQWLPAESAAPLHHAHATLVEAGLSCTLDRRPRLVVSTPPIRDACQIVAAIADAQQLRFQPGKGA</sequence>
<accession>Q8P4V7</accession>
<organism>
    <name type="scientific">Xanthomonas campestris pv. campestris (strain ATCC 33913 / DSM 3586 / NCPPB 528 / LMG 568 / P 25)</name>
    <dbReference type="NCBI Taxonomy" id="190485"/>
    <lineage>
        <taxon>Bacteria</taxon>
        <taxon>Pseudomonadati</taxon>
        <taxon>Pseudomonadota</taxon>
        <taxon>Gammaproteobacteria</taxon>
        <taxon>Lysobacterales</taxon>
        <taxon>Lysobacteraceae</taxon>
        <taxon>Xanthomonas</taxon>
    </lineage>
</organism>
<reference key="1">
    <citation type="journal article" date="2002" name="Nature">
        <title>Comparison of the genomes of two Xanthomonas pathogens with differing host specificities.</title>
        <authorList>
            <person name="da Silva A.C.R."/>
            <person name="Ferro J.A."/>
            <person name="Reinach F.C."/>
            <person name="Farah C.S."/>
            <person name="Furlan L.R."/>
            <person name="Quaggio R.B."/>
            <person name="Monteiro-Vitorello C.B."/>
            <person name="Van Sluys M.A."/>
            <person name="Almeida N.F. Jr."/>
            <person name="Alves L.M.C."/>
            <person name="do Amaral A.M."/>
            <person name="Bertolini M.C."/>
            <person name="Camargo L.E.A."/>
            <person name="Camarotte G."/>
            <person name="Cannavan F."/>
            <person name="Cardozo J."/>
            <person name="Chambergo F."/>
            <person name="Ciapina L.P."/>
            <person name="Cicarelli R.M.B."/>
            <person name="Coutinho L.L."/>
            <person name="Cursino-Santos J.R."/>
            <person name="El-Dorry H."/>
            <person name="Faria J.B."/>
            <person name="Ferreira A.J.S."/>
            <person name="Ferreira R.C.C."/>
            <person name="Ferro M.I.T."/>
            <person name="Formighieri E.F."/>
            <person name="Franco M.C."/>
            <person name="Greggio C.C."/>
            <person name="Gruber A."/>
            <person name="Katsuyama A.M."/>
            <person name="Kishi L.T."/>
            <person name="Leite R.P."/>
            <person name="Lemos E.G.M."/>
            <person name="Lemos M.V.F."/>
            <person name="Locali E.C."/>
            <person name="Machado M.A."/>
            <person name="Madeira A.M.B.N."/>
            <person name="Martinez-Rossi N.M."/>
            <person name="Martins E.C."/>
            <person name="Meidanis J."/>
            <person name="Menck C.F.M."/>
            <person name="Miyaki C.Y."/>
            <person name="Moon D.H."/>
            <person name="Moreira L.M."/>
            <person name="Novo M.T.M."/>
            <person name="Okura V.K."/>
            <person name="Oliveira M.C."/>
            <person name="Oliveira V.R."/>
            <person name="Pereira H.A."/>
            <person name="Rossi A."/>
            <person name="Sena J.A.D."/>
            <person name="Silva C."/>
            <person name="de Souza R.F."/>
            <person name="Spinola L.A.F."/>
            <person name="Takita M.A."/>
            <person name="Tamura R.E."/>
            <person name="Teixeira E.C."/>
            <person name="Tezza R.I.D."/>
            <person name="Trindade dos Santos M."/>
            <person name="Truffi D."/>
            <person name="Tsai S.M."/>
            <person name="White F.F."/>
            <person name="Setubal J.C."/>
            <person name="Kitajima J.P."/>
        </authorList>
    </citation>
    <scope>NUCLEOTIDE SEQUENCE [LARGE SCALE GENOMIC DNA]</scope>
    <source>
        <strain>ATCC 33913 / DSM 3586 / NCPPB 528 / LMG 568 / P 25</strain>
    </source>
</reference>
<protein>
    <recommendedName>
        <fullName evidence="1">Bifunctional glutamine synthetase adenylyltransferase/adenylyl-removing enzyme</fullName>
    </recommendedName>
    <alternativeName>
        <fullName evidence="1">ATP:glutamine synthetase adenylyltransferase</fullName>
    </alternativeName>
    <alternativeName>
        <fullName evidence="1">ATase</fullName>
    </alternativeName>
    <domain>
        <recommendedName>
            <fullName evidence="1">Glutamine synthetase adenylyl-L-tyrosine phosphorylase</fullName>
            <ecNumber evidence="1">2.7.7.89</ecNumber>
        </recommendedName>
        <alternativeName>
            <fullName evidence="1">Adenylyl removase</fullName>
            <shortName evidence="1">AR</shortName>
            <shortName evidence="1">AT-N</shortName>
        </alternativeName>
    </domain>
    <domain>
        <recommendedName>
            <fullName evidence="1">Glutamine synthetase adenylyl transferase</fullName>
            <ecNumber evidence="1">2.7.7.42</ecNumber>
        </recommendedName>
        <alternativeName>
            <fullName evidence="1">Adenylyl transferase</fullName>
            <shortName evidence="1">AT</shortName>
            <shortName evidence="1">AT-C</shortName>
        </alternativeName>
    </domain>
</protein>
<dbReference type="EC" id="2.7.7.89" evidence="1"/>
<dbReference type="EC" id="2.7.7.42" evidence="1"/>
<dbReference type="EMBL" id="AE008922">
    <property type="protein sequence ID" value="AAM42869.1"/>
    <property type="molecule type" value="Genomic_DNA"/>
</dbReference>
<dbReference type="RefSeq" id="NP_638945.1">
    <property type="nucleotide sequence ID" value="NC_003902.1"/>
</dbReference>
<dbReference type="RefSeq" id="WP_011038683.1">
    <property type="nucleotide sequence ID" value="NC_003902.1"/>
</dbReference>
<dbReference type="SMR" id="Q8P4V7"/>
<dbReference type="STRING" id="190485.XCC3599"/>
<dbReference type="EnsemblBacteria" id="AAM42869">
    <property type="protein sequence ID" value="AAM42869"/>
    <property type="gene ID" value="XCC3599"/>
</dbReference>
<dbReference type="KEGG" id="xcc:XCC3599"/>
<dbReference type="PATRIC" id="fig|190485.4.peg.3856"/>
<dbReference type="eggNOG" id="COG1391">
    <property type="taxonomic scope" value="Bacteria"/>
</dbReference>
<dbReference type="HOGENOM" id="CLU_006233_0_1_6"/>
<dbReference type="OrthoDB" id="9759366at2"/>
<dbReference type="Proteomes" id="UP000001010">
    <property type="component" value="Chromosome"/>
</dbReference>
<dbReference type="GO" id="GO:0005829">
    <property type="term" value="C:cytosol"/>
    <property type="evidence" value="ECO:0000318"/>
    <property type="project" value="GO_Central"/>
</dbReference>
<dbReference type="GO" id="GO:0008882">
    <property type="term" value="F:[glutamate-ammonia-ligase] adenylyltransferase activity"/>
    <property type="evidence" value="ECO:0000318"/>
    <property type="project" value="GO_Central"/>
</dbReference>
<dbReference type="GO" id="GO:0047388">
    <property type="term" value="F:[glutamine synthetase]-adenylyl-L-tyrosine phosphorylase activity"/>
    <property type="evidence" value="ECO:0007669"/>
    <property type="project" value="UniProtKB-EC"/>
</dbReference>
<dbReference type="GO" id="GO:0005524">
    <property type="term" value="F:ATP binding"/>
    <property type="evidence" value="ECO:0007669"/>
    <property type="project" value="UniProtKB-UniRule"/>
</dbReference>
<dbReference type="GO" id="GO:0000287">
    <property type="term" value="F:magnesium ion binding"/>
    <property type="evidence" value="ECO:0007669"/>
    <property type="project" value="UniProtKB-UniRule"/>
</dbReference>
<dbReference type="GO" id="GO:0000820">
    <property type="term" value="P:regulation of glutamine family amino acid metabolic process"/>
    <property type="evidence" value="ECO:0000318"/>
    <property type="project" value="GO_Central"/>
</dbReference>
<dbReference type="CDD" id="cd05401">
    <property type="entry name" value="NT_GlnE_GlnD_like"/>
    <property type="match status" value="2"/>
</dbReference>
<dbReference type="FunFam" id="1.20.120.330:FF:000005">
    <property type="entry name" value="Bifunctional glutamine synthetase adenylyltransferase/adenylyl-removing enzyme"/>
    <property type="match status" value="1"/>
</dbReference>
<dbReference type="FunFam" id="3.30.460.10:FF:000009">
    <property type="entry name" value="Bifunctional glutamine synthetase adenylyltransferase/adenylyl-removing enzyme"/>
    <property type="match status" value="2"/>
</dbReference>
<dbReference type="Gene3D" id="1.20.120.1510">
    <property type="match status" value="1"/>
</dbReference>
<dbReference type="Gene3D" id="3.30.460.10">
    <property type="entry name" value="Beta Polymerase, domain 2"/>
    <property type="match status" value="2"/>
</dbReference>
<dbReference type="Gene3D" id="1.20.120.330">
    <property type="entry name" value="Nucleotidyltransferases domain 2"/>
    <property type="match status" value="2"/>
</dbReference>
<dbReference type="HAMAP" id="MF_00802">
    <property type="entry name" value="GlnE"/>
    <property type="match status" value="1"/>
</dbReference>
<dbReference type="InterPro" id="IPR023057">
    <property type="entry name" value="GlnE"/>
</dbReference>
<dbReference type="InterPro" id="IPR005190">
    <property type="entry name" value="GlnE_rpt_dom"/>
</dbReference>
<dbReference type="InterPro" id="IPR043519">
    <property type="entry name" value="NT_sf"/>
</dbReference>
<dbReference type="InterPro" id="IPR013546">
    <property type="entry name" value="PII_UdlTrfase/GS_AdlTrfase"/>
</dbReference>
<dbReference type="NCBIfam" id="NF008292">
    <property type="entry name" value="PRK11072.1"/>
    <property type="match status" value="1"/>
</dbReference>
<dbReference type="PANTHER" id="PTHR30621:SF0">
    <property type="entry name" value="BIFUNCTIONAL GLUTAMINE SYNTHETASE ADENYLYLTRANSFERASE_ADENYLYL-REMOVING ENZYME"/>
    <property type="match status" value="1"/>
</dbReference>
<dbReference type="PANTHER" id="PTHR30621">
    <property type="entry name" value="GLUTAMINE SYNTHETASE ADENYLYLTRANSFERASE"/>
    <property type="match status" value="1"/>
</dbReference>
<dbReference type="Pfam" id="PF08335">
    <property type="entry name" value="GlnD_UR_UTase"/>
    <property type="match status" value="2"/>
</dbReference>
<dbReference type="Pfam" id="PF03710">
    <property type="entry name" value="GlnE"/>
    <property type="match status" value="2"/>
</dbReference>
<dbReference type="SUPFAM" id="SSF81301">
    <property type="entry name" value="Nucleotidyltransferase"/>
    <property type="match status" value="2"/>
</dbReference>
<dbReference type="SUPFAM" id="SSF81593">
    <property type="entry name" value="Nucleotidyltransferase substrate binding subunit/domain"/>
    <property type="match status" value="2"/>
</dbReference>
<proteinExistence type="inferred from homology"/>
<comment type="function">
    <text evidence="1">Involved in the regulation of glutamine synthetase GlnA, a key enzyme in the process to assimilate ammonia. When cellular nitrogen levels are high, the C-terminal adenylyl transferase (AT) inactivates GlnA by covalent transfer of an adenylyl group from ATP to specific tyrosine residue of GlnA, thus reducing its activity. Conversely, when nitrogen levels are low, the N-terminal adenylyl removase (AR) activates GlnA by removing the adenylyl group by phosphorolysis, increasing its activity. The regulatory region of GlnE binds the signal transduction protein PII (GlnB) which indicates the nitrogen status of the cell.</text>
</comment>
<comment type="catalytic activity">
    <reaction evidence="1">
        <text>[glutamine synthetase]-O(4)-(5'-adenylyl)-L-tyrosine + phosphate = [glutamine synthetase]-L-tyrosine + ADP</text>
        <dbReference type="Rhea" id="RHEA:43716"/>
        <dbReference type="Rhea" id="RHEA-COMP:10660"/>
        <dbReference type="Rhea" id="RHEA-COMP:10661"/>
        <dbReference type="ChEBI" id="CHEBI:43474"/>
        <dbReference type="ChEBI" id="CHEBI:46858"/>
        <dbReference type="ChEBI" id="CHEBI:83624"/>
        <dbReference type="ChEBI" id="CHEBI:456216"/>
        <dbReference type="EC" id="2.7.7.89"/>
    </reaction>
</comment>
<comment type="catalytic activity">
    <reaction evidence="1">
        <text>[glutamine synthetase]-L-tyrosine + ATP = [glutamine synthetase]-O(4)-(5'-adenylyl)-L-tyrosine + diphosphate</text>
        <dbReference type="Rhea" id="RHEA:18589"/>
        <dbReference type="Rhea" id="RHEA-COMP:10660"/>
        <dbReference type="Rhea" id="RHEA-COMP:10661"/>
        <dbReference type="ChEBI" id="CHEBI:30616"/>
        <dbReference type="ChEBI" id="CHEBI:33019"/>
        <dbReference type="ChEBI" id="CHEBI:46858"/>
        <dbReference type="ChEBI" id="CHEBI:83624"/>
        <dbReference type="EC" id="2.7.7.42"/>
    </reaction>
</comment>
<comment type="cofactor">
    <cofactor evidence="1">
        <name>Mg(2+)</name>
        <dbReference type="ChEBI" id="CHEBI:18420"/>
    </cofactor>
</comment>
<comment type="similarity">
    <text evidence="1">Belongs to the GlnE family.</text>
</comment>
<keyword id="KW-0067">ATP-binding</keyword>
<keyword id="KW-0460">Magnesium</keyword>
<keyword id="KW-0511">Multifunctional enzyme</keyword>
<keyword id="KW-0547">Nucleotide-binding</keyword>
<keyword id="KW-0548">Nucleotidyltransferase</keyword>
<keyword id="KW-1185">Reference proteome</keyword>
<keyword id="KW-0808">Transferase</keyword>
<gene>
    <name evidence="1" type="primary">glnE</name>
    <name type="ordered locus">XCC3599</name>
</gene>
<feature type="chain" id="PRO_0000209286" description="Bifunctional glutamine synthetase adenylyltransferase/adenylyl-removing enzyme">
    <location>
        <begin position="1"/>
        <end position="937"/>
    </location>
</feature>
<feature type="region of interest" description="Adenylyl removase" evidence="1">
    <location>
        <begin position="1"/>
        <end position="436"/>
    </location>
</feature>
<feature type="region of interest" description="Adenylyl transferase" evidence="1">
    <location>
        <begin position="443"/>
        <end position="937"/>
    </location>
</feature>
<name>GLNE_XANCP</name>